<proteinExistence type="inferred from homology"/>
<evidence type="ECO:0000250" key="1"/>
<evidence type="ECO:0000250" key="2">
    <source>
        <dbReference type="UniProtKB" id="O42807"/>
    </source>
</evidence>
<evidence type="ECO:0000255" key="3"/>
<evidence type="ECO:0000305" key="4"/>
<protein>
    <recommendedName>
        <fullName>Probable feruloyl esterase A</fullName>
        <ecNumber>3.1.1.73</ecNumber>
    </recommendedName>
    <alternativeName>
        <fullName>Ferulic acid esterase A</fullName>
    </alternativeName>
</protein>
<keyword id="KW-0119">Carbohydrate metabolism</keyword>
<keyword id="KW-1015">Disulfide bond</keyword>
<keyword id="KW-0325">Glycoprotein</keyword>
<keyword id="KW-0378">Hydrolase</keyword>
<keyword id="KW-0624">Polysaccharide degradation</keyword>
<keyword id="KW-0964">Secreted</keyword>
<keyword id="KW-0719">Serine esterase</keyword>
<keyword id="KW-0732">Signal</keyword>
<keyword id="KW-0858">Xylan degradation</keyword>
<organism>
    <name type="scientific">Aspergillus flavus (strain ATCC 200026 / FGSC A1120 / IAM 13836 / NRRL 3357 / JCM 12722 / SRRC 167)</name>
    <dbReference type="NCBI Taxonomy" id="332952"/>
    <lineage>
        <taxon>Eukaryota</taxon>
        <taxon>Fungi</taxon>
        <taxon>Dikarya</taxon>
        <taxon>Ascomycota</taxon>
        <taxon>Pezizomycotina</taxon>
        <taxon>Eurotiomycetes</taxon>
        <taxon>Eurotiomycetidae</taxon>
        <taxon>Eurotiales</taxon>
        <taxon>Aspergillaceae</taxon>
        <taxon>Aspergillus</taxon>
        <taxon>Aspergillus subgen. Circumdati</taxon>
    </lineage>
</organism>
<sequence>MKNFVSMHAILLACSAGAGLAAITQGISEGTYSRIVEMATISQAAYANLCNIPSTITSAGKIYNAETDINGWVLRDDSRQEIITVFRGTGSDTNLQLDTNYTQAPFDTLPQCSGCAVHGGYYVGWISVKDQVEGLVQQQASQYPDYSLVITGHSLGASMAAITAAQLSATYNNITVYTFGEPRTGNQAYASYVDETFQATNPDATKFYRVTHTNDGIPNLPPTSQGYVHHGTEYWSVEPHGPQNMYLCLGDEVQCCEAQGGQGVNDAHVTYFGMASGACTW</sequence>
<reference key="1">
    <citation type="journal article" date="2015" name="Genome Announc.">
        <title>Genome sequence of Aspergillus flavus NRRL 3357, a strain that causes aflatoxin contamination of food and feed.</title>
        <authorList>
            <person name="Nierman W.C."/>
            <person name="Yu J."/>
            <person name="Fedorova-Abrams N.D."/>
            <person name="Losada L."/>
            <person name="Cleveland T.E."/>
            <person name="Bhatnagar D."/>
            <person name="Bennett J.W."/>
            <person name="Dean R."/>
            <person name="Payne G.A."/>
        </authorList>
    </citation>
    <scope>NUCLEOTIDE SEQUENCE [LARGE SCALE GENOMIC DNA]</scope>
    <source>
        <strain>ATCC 200026 / FGSC A1120 / IAM 13836 / NRRL 3357 / JCM 12722 / SRRC 167</strain>
    </source>
</reference>
<dbReference type="EC" id="3.1.1.73"/>
<dbReference type="EMBL" id="EQ963479">
    <property type="protein sequence ID" value="EED49792.1"/>
    <property type="status" value="ALT_INIT"/>
    <property type="molecule type" value="Genomic_DNA"/>
</dbReference>
<dbReference type="RefSeq" id="XP_002380173.1">
    <property type="nucleotide sequence ID" value="XM_002380132.1"/>
</dbReference>
<dbReference type="SMR" id="B8NIB8"/>
<dbReference type="STRING" id="332952.B8NIB8"/>
<dbReference type="ESTHER" id="aspor-q2unw5">
    <property type="family name" value="Lipase_3"/>
</dbReference>
<dbReference type="GlyCosmos" id="B8NIB8">
    <property type="glycosylation" value="2 sites, No reported glycans"/>
</dbReference>
<dbReference type="EnsemblFungi" id="EED49792">
    <property type="protein sequence ID" value="EED49792"/>
    <property type="gene ID" value="AFLA_066140"/>
</dbReference>
<dbReference type="VEuPathDB" id="FungiDB:AFLA_008548"/>
<dbReference type="eggNOG" id="KOG4569">
    <property type="taxonomic scope" value="Eukaryota"/>
</dbReference>
<dbReference type="GO" id="GO:0005576">
    <property type="term" value="C:extracellular region"/>
    <property type="evidence" value="ECO:0007669"/>
    <property type="project" value="UniProtKB-SubCell"/>
</dbReference>
<dbReference type="GO" id="GO:0030600">
    <property type="term" value="F:feruloyl esterase activity"/>
    <property type="evidence" value="ECO:0007669"/>
    <property type="project" value="UniProtKB-EC"/>
</dbReference>
<dbReference type="GO" id="GO:0006629">
    <property type="term" value="P:lipid metabolic process"/>
    <property type="evidence" value="ECO:0007669"/>
    <property type="project" value="InterPro"/>
</dbReference>
<dbReference type="GO" id="GO:0045493">
    <property type="term" value="P:xylan catabolic process"/>
    <property type="evidence" value="ECO:0007669"/>
    <property type="project" value="UniProtKB-KW"/>
</dbReference>
<dbReference type="CDD" id="cd00519">
    <property type="entry name" value="Lipase_3"/>
    <property type="match status" value="1"/>
</dbReference>
<dbReference type="Gene3D" id="3.40.50.1820">
    <property type="entry name" value="alpha/beta hydrolase"/>
    <property type="match status" value="1"/>
</dbReference>
<dbReference type="InterPro" id="IPR029058">
    <property type="entry name" value="AB_hydrolase_fold"/>
</dbReference>
<dbReference type="InterPro" id="IPR051299">
    <property type="entry name" value="AB_hydrolase_lip/est"/>
</dbReference>
<dbReference type="InterPro" id="IPR002921">
    <property type="entry name" value="Fungal_lipase-type"/>
</dbReference>
<dbReference type="PANTHER" id="PTHR46640:SF1">
    <property type="entry name" value="FUNGAL LIPASE-LIKE DOMAIN-CONTAINING PROTEIN-RELATED"/>
    <property type="match status" value="1"/>
</dbReference>
<dbReference type="PANTHER" id="PTHR46640">
    <property type="entry name" value="TRIACYLGLYCEROL LIPASE, PUTATIVE (AFU_ORTHOLOGUE AFUA_6G06510)-RELATED"/>
    <property type="match status" value="1"/>
</dbReference>
<dbReference type="Pfam" id="PF01764">
    <property type="entry name" value="Lipase_3"/>
    <property type="match status" value="1"/>
</dbReference>
<dbReference type="SUPFAM" id="SSF53474">
    <property type="entry name" value="alpha/beta-Hydrolases"/>
    <property type="match status" value="1"/>
</dbReference>
<dbReference type="PROSITE" id="PS00120">
    <property type="entry name" value="LIPASE_SER"/>
    <property type="match status" value="1"/>
</dbReference>
<feature type="signal peptide" evidence="3">
    <location>
        <begin position="1"/>
        <end position="21"/>
    </location>
</feature>
<feature type="chain" id="PRO_0000393493" description="Probable feruloyl esterase A">
    <location>
        <begin position="22"/>
        <end position="281"/>
    </location>
</feature>
<feature type="active site" description="Nucleophile" evidence="2">
    <location>
        <position position="154"/>
    </location>
</feature>
<feature type="active site" description="Charge relay system" evidence="2">
    <location>
        <position position="215"/>
    </location>
</feature>
<feature type="active site" description="Charge relay system" evidence="2">
    <location>
        <position position="268"/>
    </location>
</feature>
<feature type="binding site" evidence="2">
    <location>
        <position position="98"/>
    </location>
    <ligand>
        <name>substrate</name>
    </ligand>
</feature>
<feature type="binding site" evidence="2">
    <location>
        <position position="101"/>
    </location>
    <ligand>
        <name>substrate</name>
    </ligand>
</feature>
<feature type="binding site" evidence="2">
    <location>
        <position position="268"/>
    </location>
    <ligand>
        <name>substrate</name>
    </ligand>
</feature>
<feature type="glycosylation site" description="N-linked (GlcNAc...) asparagine" evidence="3">
    <location>
        <position position="100"/>
    </location>
</feature>
<feature type="glycosylation site" description="N-linked (GlcNAc...) asparagine" evidence="3">
    <location>
        <position position="173"/>
    </location>
</feature>
<feature type="disulfide bond" evidence="2">
    <location>
        <begin position="50"/>
        <end position="279"/>
    </location>
</feature>
<feature type="disulfide bond" evidence="2">
    <location>
        <begin position="112"/>
        <end position="115"/>
    </location>
</feature>
<feature type="disulfide bond" evidence="2">
    <location>
        <begin position="248"/>
        <end position="255"/>
    </location>
</feature>
<name>FAEA_ASPFN</name>
<accession>B8NIB8</accession>
<gene>
    <name type="primary">faeA</name>
    <name type="ORF">AFLA_066140</name>
</gene>
<comment type="function">
    <text evidence="1">Involved in degradation of plant cell walls. Hydrolyzes the feruloyl-arabinose ester bond in arabinoxylans, and the feruloyl-galactose ester bond in pectin (By similarity).</text>
</comment>
<comment type="catalytic activity">
    <reaction>
        <text>feruloyl-polysaccharide + H2O = ferulate + polysaccharide.</text>
        <dbReference type="EC" id="3.1.1.73"/>
    </reaction>
</comment>
<comment type="subcellular location">
    <subcellularLocation>
        <location evidence="1">Secreted</location>
    </subcellularLocation>
</comment>
<comment type="similarity">
    <text evidence="4">Belongs to the AB hydrolase superfamily. FaeA family.</text>
</comment>
<comment type="sequence caution" evidence="4">
    <conflict type="erroneous initiation">
        <sequence resource="EMBL-CDS" id="EED49792"/>
    </conflict>
    <text>Extended N-terminus.</text>
</comment>